<feature type="chain" id="PRO_1000023195" description="Thymidylate kinase">
    <location>
        <begin position="1"/>
        <end position="209"/>
    </location>
</feature>
<feature type="binding site" evidence="1">
    <location>
        <begin position="10"/>
        <end position="17"/>
    </location>
    <ligand>
        <name>ATP</name>
        <dbReference type="ChEBI" id="CHEBI:30616"/>
    </ligand>
</feature>
<protein>
    <recommendedName>
        <fullName evidence="1">Thymidylate kinase</fullName>
        <ecNumber evidence="1">2.7.4.9</ecNumber>
    </recommendedName>
    <alternativeName>
        <fullName evidence="1">dTMP kinase</fullName>
    </alternativeName>
</protein>
<evidence type="ECO:0000255" key="1">
    <source>
        <dbReference type="HAMAP-Rule" id="MF_00165"/>
    </source>
</evidence>
<proteinExistence type="inferred from homology"/>
<sequence>MQSKFIVIEGLDGAGKSTAISFVRKYLEKNNLAAIYTREPGGTKIAEELRNLVLHNKYDEEIHSDSELLMIYAGRVQHYRNLIAPALEKGINVVSDRFYWSSMAYQGGGRGVELSKIRALNDNFLNGCEPDLVIYLDIDPILGLQRAQKVGSPDRIEKAGLEFFNRTRNVFKDLVKDSDNAIEIDAAKSIQEVEKQIYLILDKHFNFQN</sequence>
<accession>A0Q893</accession>
<name>KTHY_FRATN</name>
<keyword id="KW-0067">ATP-binding</keyword>
<keyword id="KW-0418">Kinase</keyword>
<keyword id="KW-0545">Nucleotide biosynthesis</keyword>
<keyword id="KW-0547">Nucleotide-binding</keyword>
<keyword id="KW-0808">Transferase</keyword>
<comment type="function">
    <text evidence="1">Phosphorylation of dTMP to form dTDP in both de novo and salvage pathways of dTTP synthesis.</text>
</comment>
<comment type="catalytic activity">
    <reaction evidence="1">
        <text>dTMP + ATP = dTDP + ADP</text>
        <dbReference type="Rhea" id="RHEA:13517"/>
        <dbReference type="ChEBI" id="CHEBI:30616"/>
        <dbReference type="ChEBI" id="CHEBI:58369"/>
        <dbReference type="ChEBI" id="CHEBI:63528"/>
        <dbReference type="ChEBI" id="CHEBI:456216"/>
        <dbReference type="EC" id="2.7.4.9"/>
    </reaction>
</comment>
<comment type="similarity">
    <text evidence="1">Belongs to the thymidylate kinase family.</text>
</comment>
<gene>
    <name evidence="1" type="primary">tmk</name>
    <name type="ordered locus">FTN_1598</name>
</gene>
<reference key="1">
    <citation type="journal article" date="2007" name="Genome Biol.">
        <title>Comparison of Francisella tularensis genomes reveals evolutionary events associated with the emergence of human pathogenic strains.</title>
        <authorList>
            <person name="Rohmer L."/>
            <person name="Fong C."/>
            <person name="Abmayr S."/>
            <person name="Wasnick M."/>
            <person name="Larson Freeman T.J."/>
            <person name="Radey M."/>
            <person name="Guina T."/>
            <person name="Svensson K."/>
            <person name="Hayden H.S."/>
            <person name="Jacobs M."/>
            <person name="Gallagher L.A."/>
            <person name="Manoil C."/>
            <person name="Ernst R.K."/>
            <person name="Drees B."/>
            <person name="Buckley D."/>
            <person name="Haugen E."/>
            <person name="Bovee D."/>
            <person name="Zhou Y."/>
            <person name="Chang J."/>
            <person name="Levy R."/>
            <person name="Lim R."/>
            <person name="Gillett W."/>
            <person name="Guenthener D."/>
            <person name="Kang A."/>
            <person name="Shaffer S.A."/>
            <person name="Taylor G."/>
            <person name="Chen J."/>
            <person name="Gallis B."/>
            <person name="D'Argenio D.A."/>
            <person name="Forsman M."/>
            <person name="Olson M.V."/>
            <person name="Goodlett D.R."/>
            <person name="Kaul R."/>
            <person name="Miller S.I."/>
            <person name="Brittnacher M.J."/>
        </authorList>
    </citation>
    <scope>NUCLEOTIDE SEQUENCE [LARGE SCALE GENOMIC DNA]</scope>
    <source>
        <strain>U112</strain>
    </source>
</reference>
<dbReference type="EC" id="2.7.4.9" evidence="1"/>
<dbReference type="EMBL" id="CP000439">
    <property type="protein sequence ID" value="ABK90458.1"/>
    <property type="molecule type" value="Genomic_DNA"/>
</dbReference>
<dbReference type="RefSeq" id="WP_003035078.1">
    <property type="nucleotide sequence ID" value="NZ_CP009633.1"/>
</dbReference>
<dbReference type="SMR" id="A0Q893"/>
<dbReference type="GeneID" id="75264670"/>
<dbReference type="KEGG" id="ftn:FTN_1598"/>
<dbReference type="KEGG" id="ftx:AW25_399"/>
<dbReference type="BioCyc" id="FTUL401614:G1G75-1650-MONOMER"/>
<dbReference type="Proteomes" id="UP000000762">
    <property type="component" value="Chromosome"/>
</dbReference>
<dbReference type="GO" id="GO:0005829">
    <property type="term" value="C:cytosol"/>
    <property type="evidence" value="ECO:0007669"/>
    <property type="project" value="TreeGrafter"/>
</dbReference>
<dbReference type="GO" id="GO:0005524">
    <property type="term" value="F:ATP binding"/>
    <property type="evidence" value="ECO:0007669"/>
    <property type="project" value="UniProtKB-UniRule"/>
</dbReference>
<dbReference type="GO" id="GO:0004798">
    <property type="term" value="F:dTMP kinase activity"/>
    <property type="evidence" value="ECO:0007669"/>
    <property type="project" value="UniProtKB-UniRule"/>
</dbReference>
<dbReference type="GO" id="GO:0006233">
    <property type="term" value="P:dTDP biosynthetic process"/>
    <property type="evidence" value="ECO:0007669"/>
    <property type="project" value="InterPro"/>
</dbReference>
<dbReference type="GO" id="GO:0006235">
    <property type="term" value="P:dTTP biosynthetic process"/>
    <property type="evidence" value="ECO:0007669"/>
    <property type="project" value="UniProtKB-UniRule"/>
</dbReference>
<dbReference type="GO" id="GO:0006227">
    <property type="term" value="P:dUDP biosynthetic process"/>
    <property type="evidence" value="ECO:0007669"/>
    <property type="project" value="TreeGrafter"/>
</dbReference>
<dbReference type="CDD" id="cd01672">
    <property type="entry name" value="TMPK"/>
    <property type="match status" value="1"/>
</dbReference>
<dbReference type="FunFam" id="3.40.50.300:FF:000225">
    <property type="entry name" value="Thymidylate kinase"/>
    <property type="match status" value="1"/>
</dbReference>
<dbReference type="Gene3D" id="3.40.50.300">
    <property type="entry name" value="P-loop containing nucleotide triphosphate hydrolases"/>
    <property type="match status" value="1"/>
</dbReference>
<dbReference type="HAMAP" id="MF_00165">
    <property type="entry name" value="Thymidylate_kinase"/>
    <property type="match status" value="1"/>
</dbReference>
<dbReference type="InterPro" id="IPR027417">
    <property type="entry name" value="P-loop_NTPase"/>
</dbReference>
<dbReference type="InterPro" id="IPR039430">
    <property type="entry name" value="Thymidylate_kin-like_dom"/>
</dbReference>
<dbReference type="InterPro" id="IPR018095">
    <property type="entry name" value="Thymidylate_kin_CS"/>
</dbReference>
<dbReference type="InterPro" id="IPR018094">
    <property type="entry name" value="Thymidylate_kinase"/>
</dbReference>
<dbReference type="NCBIfam" id="TIGR00041">
    <property type="entry name" value="DTMP_kinase"/>
    <property type="match status" value="1"/>
</dbReference>
<dbReference type="PANTHER" id="PTHR10344">
    <property type="entry name" value="THYMIDYLATE KINASE"/>
    <property type="match status" value="1"/>
</dbReference>
<dbReference type="PANTHER" id="PTHR10344:SF4">
    <property type="entry name" value="UMP-CMP KINASE 2, MITOCHONDRIAL"/>
    <property type="match status" value="1"/>
</dbReference>
<dbReference type="Pfam" id="PF02223">
    <property type="entry name" value="Thymidylate_kin"/>
    <property type="match status" value="1"/>
</dbReference>
<dbReference type="SUPFAM" id="SSF52540">
    <property type="entry name" value="P-loop containing nucleoside triphosphate hydrolases"/>
    <property type="match status" value="1"/>
</dbReference>
<dbReference type="PROSITE" id="PS01331">
    <property type="entry name" value="THYMIDYLATE_KINASE"/>
    <property type="match status" value="1"/>
</dbReference>
<organism>
    <name type="scientific">Francisella tularensis subsp. novicida (strain U112)</name>
    <dbReference type="NCBI Taxonomy" id="401614"/>
    <lineage>
        <taxon>Bacteria</taxon>
        <taxon>Pseudomonadati</taxon>
        <taxon>Pseudomonadota</taxon>
        <taxon>Gammaproteobacteria</taxon>
        <taxon>Thiotrichales</taxon>
        <taxon>Francisellaceae</taxon>
        <taxon>Francisella</taxon>
    </lineage>
</organism>